<dbReference type="EMBL" id="AE000657">
    <property type="protein sequence ID" value="AAC06396.1"/>
    <property type="status" value="ALT_FRAME"/>
    <property type="molecule type" value="Genomic_DNA"/>
</dbReference>
<dbReference type="PIR" id="A70301">
    <property type="entry name" value="A70301"/>
</dbReference>
<dbReference type="RefSeq" id="NP_212994.1">
    <property type="nucleotide sequence ID" value="NC_000918.1"/>
</dbReference>
<dbReference type="SMR" id="O66436"/>
<dbReference type="FunCoup" id="O66436">
    <property type="interactions" value="462"/>
</dbReference>
<dbReference type="STRING" id="224324.aq_016a"/>
<dbReference type="EnsemblBacteria" id="AAC06396">
    <property type="protein sequence ID" value="AAC06396"/>
    <property type="gene ID" value="aq_016a"/>
</dbReference>
<dbReference type="KEGG" id="aae:aq_016a"/>
<dbReference type="PATRIC" id="fig|224324.8.peg.9"/>
<dbReference type="eggNOG" id="COG0091">
    <property type="taxonomic scope" value="Bacteria"/>
</dbReference>
<dbReference type="HOGENOM" id="CLU_083987_3_3_0"/>
<dbReference type="InParanoid" id="O66436"/>
<dbReference type="OrthoDB" id="9805969at2"/>
<dbReference type="Proteomes" id="UP000000798">
    <property type="component" value="Chromosome"/>
</dbReference>
<dbReference type="GO" id="GO:0022625">
    <property type="term" value="C:cytosolic large ribosomal subunit"/>
    <property type="evidence" value="ECO:0000318"/>
    <property type="project" value="GO_Central"/>
</dbReference>
<dbReference type="GO" id="GO:0019843">
    <property type="term" value="F:rRNA binding"/>
    <property type="evidence" value="ECO:0007669"/>
    <property type="project" value="UniProtKB-UniRule"/>
</dbReference>
<dbReference type="GO" id="GO:0003735">
    <property type="term" value="F:structural constituent of ribosome"/>
    <property type="evidence" value="ECO:0000318"/>
    <property type="project" value="GO_Central"/>
</dbReference>
<dbReference type="GO" id="GO:0006412">
    <property type="term" value="P:translation"/>
    <property type="evidence" value="ECO:0000318"/>
    <property type="project" value="GO_Central"/>
</dbReference>
<dbReference type="CDD" id="cd00336">
    <property type="entry name" value="Ribosomal_L22"/>
    <property type="match status" value="1"/>
</dbReference>
<dbReference type="FunFam" id="3.90.470.10:FF:000011">
    <property type="entry name" value="50S ribosomal protein L22"/>
    <property type="match status" value="1"/>
</dbReference>
<dbReference type="Gene3D" id="3.90.470.10">
    <property type="entry name" value="Ribosomal protein L22/L17"/>
    <property type="match status" value="1"/>
</dbReference>
<dbReference type="HAMAP" id="MF_01331_B">
    <property type="entry name" value="Ribosomal_uL22_B"/>
    <property type="match status" value="1"/>
</dbReference>
<dbReference type="InterPro" id="IPR001063">
    <property type="entry name" value="Ribosomal_uL22"/>
</dbReference>
<dbReference type="InterPro" id="IPR005727">
    <property type="entry name" value="Ribosomal_uL22_bac/chlpt-type"/>
</dbReference>
<dbReference type="InterPro" id="IPR047867">
    <property type="entry name" value="Ribosomal_uL22_bac/org-type"/>
</dbReference>
<dbReference type="InterPro" id="IPR018260">
    <property type="entry name" value="Ribosomal_uL22_CS"/>
</dbReference>
<dbReference type="InterPro" id="IPR036394">
    <property type="entry name" value="Ribosomal_uL22_sf"/>
</dbReference>
<dbReference type="NCBIfam" id="TIGR01044">
    <property type="entry name" value="rplV_bact"/>
    <property type="match status" value="1"/>
</dbReference>
<dbReference type="PANTHER" id="PTHR13501">
    <property type="entry name" value="CHLOROPLAST 50S RIBOSOMAL PROTEIN L22-RELATED"/>
    <property type="match status" value="1"/>
</dbReference>
<dbReference type="PANTHER" id="PTHR13501:SF8">
    <property type="entry name" value="LARGE RIBOSOMAL SUBUNIT PROTEIN UL22M"/>
    <property type="match status" value="1"/>
</dbReference>
<dbReference type="Pfam" id="PF00237">
    <property type="entry name" value="Ribosomal_L22"/>
    <property type="match status" value="1"/>
</dbReference>
<dbReference type="SUPFAM" id="SSF54843">
    <property type="entry name" value="Ribosomal protein L22"/>
    <property type="match status" value="1"/>
</dbReference>
<dbReference type="PROSITE" id="PS00464">
    <property type="entry name" value="RIBOSOMAL_L22"/>
    <property type="match status" value="1"/>
</dbReference>
<gene>
    <name evidence="1" type="primary">rplV</name>
    <name type="ordered locus">aq_016</name>
    <name type="ORF">aq_016A</name>
</gene>
<accession>O66436</accession>
<protein>
    <recommendedName>
        <fullName evidence="1">Large ribosomal subunit protein uL22</fullName>
    </recommendedName>
    <alternativeName>
        <fullName evidence="2">50S ribosomal protein L22</fullName>
    </alternativeName>
</protein>
<name>RL22_AQUAE</name>
<proteinExistence type="inferred from homology"/>
<feature type="chain" id="PRO_0000125110" description="Large ribosomal subunit protein uL22">
    <location>
        <begin position="1"/>
        <end position="133"/>
    </location>
</feature>
<evidence type="ECO:0000255" key="1">
    <source>
        <dbReference type="HAMAP-Rule" id="MF_01331"/>
    </source>
</evidence>
<evidence type="ECO:0000305" key="2"/>
<keyword id="KW-1185">Reference proteome</keyword>
<keyword id="KW-0687">Ribonucleoprotein</keyword>
<keyword id="KW-0689">Ribosomal protein</keyword>
<keyword id="KW-0694">RNA-binding</keyword>
<keyword id="KW-0699">rRNA-binding</keyword>
<sequence>MGQLRIKDKSQRDGYKPNQSIAILRYAHISPLKARLVLREIQGKDVGDALYLLAVIPKKAARIAEKVLKSVIANAEQKGLDLDRLYIKKAVADDGPILKKWIPRAHGRATMVRKRLSHITIVLEEKPEGKEEE</sequence>
<organism>
    <name type="scientific">Aquifex aeolicus (strain VF5)</name>
    <dbReference type="NCBI Taxonomy" id="224324"/>
    <lineage>
        <taxon>Bacteria</taxon>
        <taxon>Pseudomonadati</taxon>
        <taxon>Aquificota</taxon>
        <taxon>Aquificia</taxon>
        <taxon>Aquificales</taxon>
        <taxon>Aquificaceae</taxon>
        <taxon>Aquifex</taxon>
    </lineage>
</organism>
<comment type="function">
    <text evidence="1">This protein binds specifically to 23S rRNA; its binding is stimulated by other ribosomal proteins, e.g. L4, L17, and L20. It is important during the early stages of 50S assembly. It makes multiple contacts with different domains of the 23S rRNA in the assembled 50S subunit and ribosome (By similarity).</text>
</comment>
<comment type="function">
    <text evidence="1">The globular domain of the protein is located near the polypeptide exit tunnel on the outside of the subunit, while an extended beta-hairpin is found that lines the wall of the exit tunnel in the center of the 70S ribosome.</text>
</comment>
<comment type="subunit">
    <text evidence="1">Part of the 50S ribosomal subunit.</text>
</comment>
<comment type="similarity">
    <text evidence="1">Belongs to the universal ribosomal protein uL22 family.</text>
</comment>
<comment type="sequence caution" evidence="2">
    <conflict type="frameshift">
        <sequence resource="EMBL-CDS" id="AAC06396"/>
    </conflict>
</comment>
<reference key="1">
    <citation type="journal article" date="1998" name="Nature">
        <title>The complete genome of the hyperthermophilic bacterium Aquifex aeolicus.</title>
        <authorList>
            <person name="Deckert G."/>
            <person name="Warren P.V."/>
            <person name="Gaasterland T."/>
            <person name="Young W.G."/>
            <person name="Lenox A.L."/>
            <person name="Graham D.E."/>
            <person name="Overbeek R."/>
            <person name="Snead M.A."/>
            <person name="Keller M."/>
            <person name="Aujay M."/>
            <person name="Huber R."/>
            <person name="Feldman R.A."/>
            <person name="Short J.M."/>
            <person name="Olsen G.J."/>
            <person name="Swanson R.V."/>
        </authorList>
    </citation>
    <scope>NUCLEOTIDE SEQUENCE [LARGE SCALE GENOMIC DNA]</scope>
    <source>
        <strain>VF5</strain>
    </source>
</reference>